<dbReference type="EMBL" id="AE016828">
    <property type="protein sequence ID" value="AAO89807.1"/>
    <property type="molecule type" value="Genomic_DNA"/>
</dbReference>
<dbReference type="RefSeq" id="NP_819293.1">
    <property type="nucleotide sequence ID" value="NC_002971.4"/>
</dbReference>
<dbReference type="RefSeq" id="WP_005771523.1">
    <property type="nucleotide sequence ID" value="NZ_CDBG01000001.1"/>
</dbReference>
<dbReference type="SMR" id="Q83ER5"/>
<dbReference type="STRING" id="227377.CBU_0249"/>
<dbReference type="DNASU" id="1208130"/>
<dbReference type="EnsemblBacteria" id="AAO89807">
    <property type="protein sequence ID" value="AAO89807"/>
    <property type="gene ID" value="CBU_0249"/>
</dbReference>
<dbReference type="GeneID" id="1208130"/>
<dbReference type="KEGG" id="cbu:CBU_0249"/>
<dbReference type="PATRIC" id="fig|227377.7.peg.244"/>
<dbReference type="eggNOG" id="COG0198">
    <property type="taxonomic scope" value="Bacteria"/>
</dbReference>
<dbReference type="HOGENOM" id="CLU_093315_2_2_6"/>
<dbReference type="OrthoDB" id="9807419at2"/>
<dbReference type="Proteomes" id="UP000002671">
    <property type="component" value="Chromosome"/>
</dbReference>
<dbReference type="GO" id="GO:0022625">
    <property type="term" value="C:cytosolic large ribosomal subunit"/>
    <property type="evidence" value="ECO:0000318"/>
    <property type="project" value="GO_Central"/>
</dbReference>
<dbReference type="GO" id="GO:0019843">
    <property type="term" value="F:rRNA binding"/>
    <property type="evidence" value="ECO:0007669"/>
    <property type="project" value="UniProtKB-UniRule"/>
</dbReference>
<dbReference type="GO" id="GO:0003735">
    <property type="term" value="F:structural constituent of ribosome"/>
    <property type="evidence" value="ECO:0007669"/>
    <property type="project" value="InterPro"/>
</dbReference>
<dbReference type="GO" id="GO:0006412">
    <property type="term" value="P:translation"/>
    <property type="evidence" value="ECO:0000318"/>
    <property type="project" value="GO_Central"/>
</dbReference>
<dbReference type="CDD" id="cd06089">
    <property type="entry name" value="KOW_RPL26"/>
    <property type="match status" value="1"/>
</dbReference>
<dbReference type="FunFam" id="2.30.30.30:FF:000004">
    <property type="entry name" value="50S ribosomal protein L24"/>
    <property type="match status" value="1"/>
</dbReference>
<dbReference type="Gene3D" id="2.30.30.30">
    <property type="match status" value="1"/>
</dbReference>
<dbReference type="HAMAP" id="MF_01326_B">
    <property type="entry name" value="Ribosomal_uL24_B"/>
    <property type="match status" value="1"/>
</dbReference>
<dbReference type="InterPro" id="IPR005824">
    <property type="entry name" value="KOW"/>
</dbReference>
<dbReference type="InterPro" id="IPR014722">
    <property type="entry name" value="Rib_uL2_dom2"/>
</dbReference>
<dbReference type="InterPro" id="IPR003256">
    <property type="entry name" value="Ribosomal_uL24"/>
</dbReference>
<dbReference type="InterPro" id="IPR005825">
    <property type="entry name" value="Ribosomal_uL24_CS"/>
</dbReference>
<dbReference type="InterPro" id="IPR041988">
    <property type="entry name" value="Ribosomal_uL24_KOW"/>
</dbReference>
<dbReference type="InterPro" id="IPR008991">
    <property type="entry name" value="Translation_prot_SH3-like_sf"/>
</dbReference>
<dbReference type="NCBIfam" id="TIGR01079">
    <property type="entry name" value="rplX_bact"/>
    <property type="match status" value="1"/>
</dbReference>
<dbReference type="PANTHER" id="PTHR12903">
    <property type="entry name" value="MITOCHONDRIAL RIBOSOMAL PROTEIN L24"/>
    <property type="match status" value="1"/>
</dbReference>
<dbReference type="Pfam" id="PF00467">
    <property type="entry name" value="KOW"/>
    <property type="match status" value="1"/>
</dbReference>
<dbReference type="Pfam" id="PF17136">
    <property type="entry name" value="ribosomal_L24"/>
    <property type="match status" value="1"/>
</dbReference>
<dbReference type="SMART" id="SM00739">
    <property type="entry name" value="KOW"/>
    <property type="match status" value="1"/>
</dbReference>
<dbReference type="SUPFAM" id="SSF50104">
    <property type="entry name" value="Translation proteins SH3-like domain"/>
    <property type="match status" value="1"/>
</dbReference>
<dbReference type="PROSITE" id="PS01108">
    <property type="entry name" value="RIBOSOMAL_L24"/>
    <property type="match status" value="1"/>
</dbReference>
<protein>
    <recommendedName>
        <fullName evidence="1">Large ribosomal subunit protein uL24</fullName>
    </recommendedName>
    <alternativeName>
        <fullName evidence="2">50S ribosomal protein L24</fullName>
    </alternativeName>
</protein>
<keyword id="KW-1185">Reference proteome</keyword>
<keyword id="KW-0687">Ribonucleoprotein</keyword>
<keyword id="KW-0689">Ribosomal protein</keyword>
<keyword id="KW-0694">RNA-binding</keyword>
<keyword id="KW-0699">rRNA-binding</keyword>
<reference key="1">
    <citation type="journal article" date="2003" name="Proc. Natl. Acad. Sci. U.S.A.">
        <title>Complete genome sequence of the Q-fever pathogen, Coxiella burnetii.</title>
        <authorList>
            <person name="Seshadri R."/>
            <person name="Paulsen I.T."/>
            <person name="Eisen J.A."/>
            <person name="Read T.D."/>
            <person name="Nelson K.E."/>
            <person name="Nelson W.C."/>
            <person name="Ward N.L."/>
            <person name="Tettelin H."/>
            <person name="Davidsen T.M."/>
            <person name="Beanan M.J."/>
            <person name="DeBoy R.T."/>
            <person name="Daugherty S.C."/>
            <person name="Brinkac L.M."/>
            <person name="Madupu R."/>
            <person name="Dodson R.J."/>
            <person name="Khouri H.M."/>
            <person name="Lee K.H."/>
            <person name="Carty H.A."/>
            <person name="Scanlan D."/>
            <person name="Heinzen R.A."/>
            <person name="Thompson H.A."/>
            <person name="Samuel J.E."/>
            <person name="Fraser C.M."/>
            <person name="Heidelberg J.F."/>
        </authorList>
    </citation>
    <scope>NUCLEOTIDE SEQUENCE [LARGE SCALE GENOMIC DNA]</scope>
    <source>
        <strain>RSA 493 / Nine Mile phase I</strain>
    </source>
</reference>
<gene>
    <name evidence="1" type="primary">rplX</name>
    <name type="ordered locus">CBU_0249</name>
</gene>
<name>RL24_COXBU</name>
<evidence type="ECO:0000255" key="1">
    <source>
        <dbReference type="HAMAP-Rule" id="MF_01326"/>
    </source>
</evidence>
<evidence type="ECO:0000305" key="2"/>
<feature type="chain" id="PRO_0000130652" description="Large ribosomal subunit protein uL24">
    <location>
        <begin position="1"/>
        <end position="107"/>
    </location>
</feature>
<accession>Q83ER5</accession>
<sequence length="107" mass="11791">MAIKKIKKDDTVIVITGRDKGRQGKVLKVLPNSRLLVEGINLVKKHVKPNPNKNEQGGILERELSIHVSNVAIYNPAAKKADRVGIKTLEDGSKVRIFKSNGEVIDV</sequence>
<proteinExistence type="inferred from homology"/>
<comment type="function">
    <text evidence="1">One of two assembly initiator proteins, it binds directly to the 5'-end of the 23S rRNA, where it nucleates assembly of the 50S subunit.</text>
</comment>
<comment type="function">
    <text evidence="1">One of the proteins that surrounds the polypeptide exit tunnel on the outside of the subunit.</text>
</comment>
<comment type="subunit">
    <text evidence="1">Part of the 50S ribosomal subunit.</text>
</comment>
<comment type="similarity">
    <text evidence="1">Belongs to the universal ribosomal protein uL24 family.</text>
</comment>
<organism>
    <name type="scientific">Coxiella burnetii (strain RSA 493 / Nine Mile phase I)</name>
    <dbReference type="NCBI Taxonomy" id="227377"/>
    <lineage>
        <taxon>Bacteria</taxon>
        <taxon>Pseudomonadati</taxon>
        <taxon>Pseudomonadota</taxon>
        <taxon>Gammaproteobacteria</taxon>
        <taxon>Legionellales</taxon>
        <taxon>Coxiellaceae</taxon>
        <taxon>Coxiella</taxon>
    </lineage>
</organism>